<protein>
    <recommendedName>
        <fullName evidence="1">Elongation factor Ts</fullName>
        <shortName evidence="1">EF-Ts</shortName>
    </recommendedName>
</protein>
<evidence type="ECO:0000255" key="1">
    <source>
        <dbReference type="HAMAP-Rule" id="MF_00050"/>
    </source>
</evidence>
<proteinExistence type="inferred from homology"/>
<comment type="function">
    <text evidence="1">Associates with the EF-Tu.GDP complex and induces the exchange of GDP to GTP. It remains bound to the aminoacyl-tRNA.EF-Tu.GTP complex up to the GTP hydrolysis stage on the ribosome.</text>
</comment>
<comment type="subcellular location">
    <subcellularLocation>
        <location evidence="1">Cytoplasm</location>
    </subcellularLocation>
</comment>
<comment type="similarity">
    <text evidence="1">Belongs to the EF-Ts family.</text>
</comment>
<organism>
    <name type="scientific">Haemophilus influenzae (strain PittGG)</name>
    <dbReference type="NCBI Taxonomy" id="374931"/>
    <lineage>
        <taxon>Bacteria</taxon>
        <taxon>Pseudomonadati</taxon>
        <taxon>Pseudomonadota</taxon>
        <taxon>Gammaproteobacteria</taxon>
        <taxon>Pasteurellales</taxon>
        <taxon>Pasteurellaceae</taxon>
        <taxon>Haemophilus</taxon>
    </lineage>
</organism>
<gene>
    <name evidence="1" type="primary">tsf</name>
    <name type="ordered locus">CGSHiGG_08130</name>
</gene>
<accession>A5UI56</accession>
<reference key="1">
    <citation type="journal article" date="2007" name="Genome Biol.">
        <title>Characterization and modeling of the Haemophilus influenzae core and supragenomes based on the complete genomic sequences of Rd and 12 clinical nontypeable strains.</title>
        <authorList>
            <person name="Hogg J.S."/>
            <person name="Hu F.Z."/>
            <person name="Janto B."/>
            <person name="Boissy R."/>
            <person name="Hayes J."/>
            <person name="Keefe R."/>
            <person name="Post J.C."/>
            <person name="Ehrlich G.D."/>
        </authorList>
    </citation>
    <scope>NUCLEOTIDE SEQUENCE [LARGE SCALE GENOMIC DNA]</scope>
    <source>
        <strain>PittGG</strain>
    </source>
</reference>
<dbReference type="EMBL" id="CP000672">
    <property type="protein sequence ID" value="ABR00462.1"/>
    <property type="molecule type" value="Genomic_DNA"/>
</dbReference>
<dbReference type="SMR" id="A5UI56"/>
<dbReference type="KEGG" id="hiq:CGSHiGG_08130"/>
<dbReference type="HOGENOM" id="CLU_047155_0_2_6"/>
<dbReference type="Proteomes" id="UP000001990">
    <property type="component" value="Chromosome"/>
</dbReference>
<dbReference type="GO" id="GO:0005737">
    <property type="term" value="C:cytoplasm"/>
    <property type="evidence" value="ECO:0007669"/>
    <property type="project" value="UniProtKB-SubCell"/>
</dbReference>
<dbReference type="GO" id="GO:0003746">
    <property type="term" value="F:translation elongation factor activity"/>
    <property type="evidence" value="ECO:0007669"/>
    <property type="project" value="UniProtKB-UniRule"/>
</dbReference>
<dbReference type="CDD" id="cd14275">
    <property type="entry name" value="UBA_EF-Ts"/>
    <property type="match status" value="1"/>
</dbReference>
<dbReference type="FunFam" id="1.10.286.20:FF:000001">
    <property type="entry name" value="Elongation factor Ts"/>
    <property type="match status" value="1"/>
</dbReference>
<dbReference type="FunFam" id="1.10.8.10:FF:000001">
    <property type="entry name" value="Elongation factor Ts"/>
    <property type="match status" value="1"/>
</dbReference>
<dbReference type="FunFam" id="3.30.479.20:FF:000001">
    <property type="entry name" value="Elongation factor Ts"/>
    <property type="match status" value="1"/>
</dbReference>
<dbReference type="Gene3D" id="1.10.286.20">
    <property type="match status" value="1"/>
</dbReference>
<dbReference type="Gene3D" id="1.10.8.10">
    <property type="entry name" value="DNA helicase RuvA subunit, C-terminal domain"/>
    <property type="match status" value="1"/>
</dbReference>
<dbReference type="Gene3D" id="3.30.479.20">
    <property type="entry name" value="Elongation factor Ts, dimerisation domain"/>
    <property type="match status" value="2"/>
</dbReference>
<dbReference type="HAMAP" id="MF_00050">
    <property type="entry name" value="EF_Ts"/>
    <property type="match status" value="1"/>
</dbReference>
<dbReference type="InterPro" id="IPR036402">
    <property type="entry name" value="EF-Ts_dimer_sf"/>
</dbReference>
<dbReference type="InterPro" id="IPR001816">
    <property type="entry name" value="Transl_elong_EFTs/EF1B"/>
</dbReference>
<dbReference type="InterPro" id="IPR014039">
    <property type="entry name" value="Transl_elong_EFTs/EF1B_dimer"/>
</dbReference>
<dbReference type="InterPro" id="IPR018101">
    <property type="entry name" value="Transl_elong_Ts_CS"/>
</dbReference>
<dbReference type="InterPro" id="IPR009060">
    <property type="entry name" value="UBA-like_sf"/>
</dbReference>
<dbReference type="NCBIfam" id="TIGR00116">
    <property type="entry name" value="tsf"/>
    <property type="match status" value="1"/>
</dbReference>
<dbReference type="PANTHER" id="PTHR11741">
    <property type="entry name" value="ELONGATION FACTOR TS"/>
    <property type="match status" value="1"/>
</dbReference>
<dbReference type="PANTHER" id="PTHR11741:SF0">
    <property type="entry name" value="ELONGATION FACTOR TS, MITOCHONDRIAL"/>
    <property type="match status" value="1"/>
</dbReference>
<dbReference type="Pfam" id="PF00889">
    <property type="entry name" value="EF_TS"/>
    <property type="match status" value="1"/>
</dbReference>
<dbReference type="SUPFAM" id="SSF54713">
    <property type="entry name" value="Elongation factor Ts (EF-Ts), dimerisation domain"/>
    <property type="match status" value="2"/>
</dbReference>
<dbReference type="SUPFAM" id="SSF46934">
    <property type="entry name" value="UBA-like"/>
    <property type="match status" value="1"/>
</dbReference>
<dbReference type="PROSITE" id="PS01126">
    <property type="entry name" value="EF_TS_1"/>
    <property type="match status" value="1"/>
</dbReference>
<dbReference type="PROSITE" id="PS01127">
    <property type="entry name" value="EF_TS_2"/>
    <property type="match status" value="1"/>
</dbReference>
<sequence>MAEITASLVKELRDRTGAGMMECKKALVEANGDIELAIDNMRKSGQAKAAKKAGRVAAEGVILARVENGFGVLVEMNCETDFVAKDAGFLGLANEVADFAAANKGTTIEALQAQFEEKRAALVAKIGENMNIRRVAYLDGQVIAQYLHGAKIGVLVAGEGSDDELKKVAMHVAASKPEFVNPEDVSAEVVEHERQIQIDIAINSGKPKEIAEKMVEGRMKKFTGEVSLTGQAFVMDPSVSVGDFLKSVNTSVSNFIRLEVGEGIEKKEEDFAAEVAKITGGNA</sequence>
<feature type="chain" id="PRO_1000006103" description="Elongation factor Ts">
    <location>
        <begin position="1"/>
        <end position="283"/>
    </location>
</feature>
<feature type="region of interest" description="Involved in Mg(2+) ion dislocation from EF-Tu" evidence="1">
    <location>
        <begin position="80"/>
        <end position="83"/>
    </location>
</feature>
<name>EFTS_HAEIG</name>
<keyword id="KW-0963">Cytoplasm</keyword>
<keyword id="KW-0251">Elongation factor</keyword>
<keyword id="KW-0648">Protein biosynthesis</keyword>